<feature type="chain" id="PRO_0000177748" description="Peptide chain release factor 1">
    <location>
        <begin position="1"/>
        <end position="358"/>
    </location>
</feature>
<feature type="modified residue" description="N5-methylglutamine" evidence="1">
    <location>
        <position position="237"/>
    </location>
</feature>
<reference key="1">
    <citation type="journal article" date="2001" name="Proc. Natl. Acad. Sci. U.S.A.">
        <title>Genome sequence of an industrial microorganism Streptomyces avermitilis: deducing the ability of producing secondary metabolites.</title>
        <authorList>
            <person name="Omura S."/>
            <person name="Ikeda H."/>
            <person name="Ishikawa J."/>
            <person name="Hanamoto A."/>
            <person name="Takahashi C."/>
            <person name="Shinose M."/>
            <person name="Takahashi Y."/>
            <person name="Horikawa H."/>
            <person name="Nakazawa H."/>
            <person name="Osonoe T."/>
            <person name="Kikuchi H."/>
            <person name="Shiba T."/>
            <person name="Sakaki Y."/>
            <person name="Hattori M."/>
        </authorList>
    </citation>
    <scope>NUCLEOTIDE SEQUENCE [LARGE SCALE GENOMIC DNA]</scope>
    <source>
        <strain>ATCC 31267 / DSM 46492 / JCM 5070 / NBRC 14893 / NCIMB 12804 / NRRL 8165 / MA-4680</strain>
    </source>
</reference>
<reference key="2">
    <citation type="journal article" date="2003" name="Nat. Biotechnol.">
        <title>Complete genome sequence and comparative analysis of the industrial microorganism Streptomyces avermitilis.</title>
        <authorList>
            <person name="Ikeda H."/>
            <person name="Ishikawa J."/>
            <person name="Hanamoto A."/>
            <person name="Shinose M."/>
            <person name="Kikuchi H."/>
            <person name="Shiba T."/>
            <person name="Sakaki Y."/>
            <person name="Hattori M."/>
            <person name="Omura S."/>
        </authorList>
    </citation>
    <scope>NUCLEOTIDE SEQUENCE [LARGE SCALE GENOMIC DNA]</scope>
    <source>
        <strain>ATCC 31267 / DSM 46492 / JCM 5070 / NBRC 14893 / NCIMB 12804 / NRRL 8165 / MA-4680</strain>
    </source>
</reference>
<gene>
    <name evidence="1" type="primary">prfA</name>
    <name type="ordered locus">SAV_2912</name>
</gene>
<name>RF1_STRAW</name>
<keyword id="KW-0963">Cytoplasm</keyword>
<keyword id="KW-0488">Methylation</keyword>
<keyword id="KW-0648">Protein biosynthesis</keyword>
<keyword id="KW-1185">Reference proteome</keyword>
<protein>
    <recommendedName>
        <fullName evidence="1">Peptide chain release factor 1</fullName>
        <shortName evidence="1">RF-1</shortName>
    </recommendedName>
</protein>
<proteinExistence type="inferred from homology"/>
<sequence>MFEAVEELIGEHADLEKKLADPSVHADQANARKLNKRYAELTPIVATYRSWKQTGDDIETAKEFVADDPDFAAEVKDLEKQREELTEKLRLLLVPRDPSDDKDVILEIKAGAGGDESALFAGDLLRMYLRYAERVGWKTEIIDSTESELGGYKDVQVAVKTKGGQGATEPGQGVWARMKYEGGVHRVQRVPSTESQGRIHTSAAGVLVTPEAEEVDVEIHANDLRIDVYRSSGPGGQSVNTTDSAVRITHLPTGVVASCQNEKSQLQNKEQAMRILRSRLLAAAQEEAEREAADARRSQVRTVDRSEKIRTYNFPENRISDHRVGFKAYNLDQVLDGDLDAMIQACVDADSAAKLAAA</sequence>
<comment type="function">
    <text evidence="1">Peptide chain release factor 1 directs the termination of translation in response to the peptide chain termination codons UAG and UAA.</text>
</comment>
<comment type="subcellular location">
    <subcellularLocation>
        <location evidence="1">Cytoplasm</location>
    </subcellularLocation>
</comment>
<comment type="PTM">
    <text evidence="1">Methylated by PrmC. Methylation increases the termination efficiency of RF1.</text>
</comment>
<comment type="similarity">
    <text evidence="1">Belongs to the prokaryotic/mitochondrial release factor family.</text>
</comment>
<accession>Q82J70</accession>
<evidence type="ECO:0000255" key="1">
    <source>
        <dbReference type="HAMAP-Rule" id="MF_00093"/>
    </source>
</evidence>
<organism>
    <name type="scientific">Streptomyces avermitilis (strain ATCC 31267 / DSM 46492 / JCM 5070 / NBRC 14893 / NCIMB 12804 / NRRL 8165 / MA-4680)</name>
    <dbReference type="NCBI Taxonomy" id="227882"/>
    <lineage>
        <taxon>Bacteria</taxon>
        <taxon>Bacillati</taxon>
        <taxon>Actinomycetota</taxon>
        <taxon>Actinomycetes</taxon>
        <taxon>Kitasatosporales</taxon>
        <taxon>Streptomycetaceae</taxon>
        <taxon>Streptomyces</taxon>
    </lineage>
</organism>
<dbReference type="EMBL" id="BA000030">
    <property type="protein sequence ID" value="BAC70623.1"/>
    <property type="molecule type" value="Genomic_DNA"/>
</dbReference>
<dbReference type="RefSeq" id="WP_010984344.1">
    <property type="nucleotide sequence ID" value="NZ_JZJK01000090.1"/>
</dbReference>
<dbReference type="SMR" id="Q82J70"/>
<dbReference type="GeneID" id="41539996"/>
<dbReference type="KEGG" id="sma:SAVERM_2912"/>
<dbReference type="eggNOG" id="COG0216">
    <property type="taxonomic scope" value="Bacteria"/>
</dbReference>
<dbReference type="HOGENOM" id="CLU_036856_0_1_11"/>
<dbReference type="OrthoDB" id="9806673at2"/>
<dbReference type="Proteomes" id="UP000000428">
    <property type="component" value="Chromosome"/>
</dbReference>
<dbReference type="GO" id="GO:0005737">
    <property type="term" value="C:cytoplasm"/>
    <property type="evidence" value="ECO:0007669"/>
    <property type="project" value="UniProtKB-SubCell"/>
</dbReference>
<dbReference type="GO" id="GO:0016149">
    <property type="term" value="F:translation release factor activity, codon specific"/>
    <property type="evidence" value="ECO:0007669"/>
    <property type="project" value="UniProtKB-UniRule"/>
</dbReference>
<dbReference type="FunFam" id="3.30.160.20:FF:000004">
    <property type="entry name" value="Peptide chain release factor 1"/>
    <property type="match status" value="1"/>
</dbReference>
<dbReference type="FunFam" id="3.30.70.1660:FF:000002">
    <property type="entry name" value="Peptide chain release factor 1"/>
    <property type="match status" value="1"/>
</dbReference>
<dbReference type="Gene3D" id="3.30.160.20">
    <property type="match status" value="1"/>
</dbReference>
<dbReference type="Gene3D" id="3.30.70.1660">
    <property type="match status" value="1"/>
</dbReference>
<dbReference type="Gene3D" id="6.10.140.1950">
    <property type="match status" value="1"/>
</dbReference>
<dbReference type="HAMAP" id="MF_00093">
    <property type="entry name" value="Rel_fac_1"/>
    <property type="match status" value="1"/>
</dbReference>
<dbReference type="InterPro" id="IPR005139">
    <property type="entry name" value="PCRF"/>
</dbReference>
<dbReference type="InterPro" id="IPR000352">
    <property type="entry name" value="Pep_chain_release_fac_I"/>
</dbReference>
<dbReference type="InterPro" id="IPR045853">
    <property type="entry name" value="Pep_chain_release_fac_I_sf"/>
</dbReference>
<dbReference type="InterPro" id="IPR050057">
    <property type="entry name" value="Prokaryotic/Mito_RF"/>
</dbReference>
<dbReference type="InterPro" id="IPR004373">
    <property type="entry name" value="RF-1"/>
</dbReference>
<dbReference type="NCBIfam" id="TIGR00019">
    <property type="entry name" value="prfA"/>
    <property type="match status" value="1"/>
</dbReference>
<dbReference type="NCBIfam" id="NF001859">
    <property type="entry name" value="PRK00591.1"/>
    <property type="match status" value="1"/>
</dbReference>
<dbReference type="PANTHER" id="PTHR43804">
    <property type="entry name" value="LD18447P"/>
    <property type="match status" value="1"/>
</dbReference>
<dbReference type="PANTHER" id="PTHR43804:SF7">
    <property type="entry name" value="LD18447P"/>
    <property type="match status" value="1"/>
</dbReference>
<dbReference type="Pfam" id="PF03462">
    <property type="entry name" value="PCRF"/>
    <property type="match status" value="1"/>
</dbReference>
<dbReference type="Pfam" id="PF00472">
    <property type="entry name" value="RF-1"/>
    <property type="match status" value="1"/>
</dbReference>
<dbReference type="SMART" id="SM00937">
    <property type="entry name" value="PCRF"/>
    <property type="match status" value="1"/>
</dbReference>
<dbReference type="SUPFAM" id="SSF75620">
    <property type="entry name" value="Release factor"/>
    <property type="match status" value="1"/>
</dbReference>
<dbReference type="PROSITE" id="PS00745">
    <property type="entry name" value="RF_PROK_I"/>
    <property type="match status" value="1"/>
</dbReference>